<keyword id="KW-0997">Cell inner membrane</keyword>
<keyword id="KW-1003">Cell membrane</keyword>
<keyword id="KW-0472">Membrane</keyword>
<keyword id="KW-0812">Transmembrane</keyword>
<keyword id="KW-1133">Transmembrane helix</keyword>
<comment type="subcellular location">
    <subcellularLocation>
        <location evidence="1">Cell inner membrane</location>
        <topology evidence="1">Multi-pass membrane protein</topology>
    </subcellularLocation>
</comment>
<comment type="similarity">
    <text evidence="1">Belongs to the universal stress protein B family.</text>
</comment>
<dbReference type="EMBL" id="AM933172">
    <property type="protein sequence ID" value="CAR34989.1"/>
    <property type="molecule type" value="Genomic_DNA"/>
</dbReference>
<dbReference type="RefSeq" id="WP_000626193.1">
    <property type="nucleotide sequence ID" value="NC_011294.1"/>
</dbReference>
<dbReference type="GeneID" id="66757914"/>
<dbReference type="KEGG" id="set:SEN3413"/>
<dbReference type="HOGENOM" id="CLU_151816_0_0_6"/>
<dbReference type="Proteomes" id="UP000000613">
    <property type="component" value="Chromosome"/>
</dbReference>
<dbReference type="GO" id="GO:0005886">
    <property type="term" value="C:plasma membrane"/>
    <property type="evidence" value="ECO:0007669"/>
    <property type="project" value="UniProtKB-SubCell"/>
</dbReference>
<dbReference type="HAMAP" id="MF_01088">
    <property type="entry name" value="UspB"/>
    <property type="match status" value="1"/>
</dbReference>
<dbReference type="InterPro" id="IPR019598">
    <property type="entry name" value="Universal_stress_protein_B"/>
</dbReference>
<dbReference type="NCBIfam" id="NF003435">
    <property type="entry name" value="PRK04960.1"/>
    <property type="match status" value="1"/>
</dbReference>
<dbReference type="Pfam" id="PF10625">
    <property type="entry name" value="UspB"/>
    <property type="match status" value="1"/>
</dbReference>
<name>USPB_SALEP</name>
<proteinExistence type="inferred from homology"/>
<reference key="1">
    <citation type="journal article" date="2008" name="Genome Res.">
        <title>Comparative genome analysis of Salmonella enteritidis PT4 and Salmonella gallinarum 287/91 provides insights into evolutionary and host adaptation pathways.</title>
        <authorList>
            <person name="Thomson N.R."/>
            <person name="Clayton D.J."/>
            <person name="Windhorst D."/>
            <person name="Vernikos G."/>
            <person name="Davidson S."/>
            <person name="Churcher C."/>
            <person name="Quail M.A."/>
            <person name="Stevens M."/>
            <person name="Jones M.A."/>
            <person name="Watson M."/>
            <person name="Barron A."/>
            <person name="Layton A."/>
            <person name="Pickard D."/>
            <person name="Kingsley R.A."/>
            <person name="Bignell A."/>
            <person name="Clark L."/>
            <person name="Harris B."/>
            <person name="Ormond D."/>
            <person name="Abdellah Z."/>
            <person name="Brooks K."/>
            <person name="Cherevach I."/>
            <person name="Chillingworth T."/>
            <person name="Woodward J."/>
            <person name="Norberczak H."/>
            <person name="Lord A."/>
            <person name="Arrowsmith C."/>
            <person name="Jagels K."/>
            <person name="Moule S."/>
            <person name="Mungall K."/>
            <person name="Saunders M."/>
            <person name="Whitehead S."/>
            <person name="Chabalgoity J.A."/>
            <person name="Maskell D."/>
            <person name="Humphreys T."/>
            <person name="Roberts M."/>
            <person name="Barrow P.A."/>
            <person name="Dougan G."/>
            <person name="Parkhill J."/>
        </authorList>
    </citation>
    <scope>NUCLEOTIDE SEQUENCE [LARGE SCALE GENOMIC DNA]</scope>
    <source>
        <strain>P125109</strain>
    </source>
</reference>
<accession>B5R3Z1</accession>
<evidence type="ECO:0000255" key="1">
    <source>
        <dbReference type="HAMAP-Rule" id="MF_01088"/>
    </source>
</evidence>
<feature type="chain" id="PRO_1000136920" description="Universal stress protein B">
    <location>
        <begin position="1"/>
        <end position="111"/>
    </location>
</feature>
<feature type="transmembrane region" description="Helical" evidence="1">
    <location>
        <begin position="1"/>
        <end position="21"/>
    </location>
</feature>
<feature type="transmembrane region" description="Helical" evidence="1">
    <location>
        <begin position="90"/>
        <end position="110"/>
    </location>
</feature>
<organism>
    <name type="scientific">Salmonella enteritidis PT4 (strain P125109)</name>
    <dbReference type="NCBI Taxonomy" id="550537"/>
    <lineage>
        <taxon>Bacteria</taxon>
        <taxon>Pseudomonadati</taxon>
        <taxon>Pseudomonadota</taxon>
        <taxon>Gammaproteobacteria</taxon>
        <taxon>Enterobacterales</taxon>
        <taxon>Enterobacteriaceae</taxon>
        <taxon>Salmonella</taxon>
    </lineage>
</organism>
<protein>
    <recommendedName>
        <fullName evidence="1">Universal stress protein B</fullName>
    </recommendedName>
</protein>
<gene>
    <name evidence="1" type="primary">uspB</name>
    <name type="ordered locus">SEN3413</name>
</gene>
<sequence length="111" mass="13014">MISTVSLFWALCVVCIVNMARYFSSLRALLVVLRGCDPLLYQYVDGGGFFTTHGQPNKQVRLVWYIYAQRYRDHHDEEFIRRCERVRRQFLLTSALCGLVVVSLIALMIWH</sequence>